<name>IF2_PAEAT</name>
<reference key="1">
    <citation type="journal article" date="2006" name="PLoS Genet.">
        <title>Secrets of soil survival revealed by the genome sequence of Arthrobacter aurescens TC1.</title>
        <authorList>
            <person name="Mongodin E.F."/>
            <person name="Shapir N."/>
            <person name="Daugherty S.C."/>
            <person name="DeBoy R.T."/>
            <person name="Emerson J.B."/>
            <person name="Shvartzbeyn A."/>
            <person name="Radune D."/>
            <person name="Vamathevan J."/>
            <person name="Riggs F."/>
            <person name="Grinberg V."/>
            <person name="Khouri H.M."/>
            <person name="Wackett L.P."/>
            <person name="Nelson K.E."/>
            <person name="Sadowsky M.J."/>
        </authorList>
    </citation>
    <scope>NUCLEOTIDE SEQUENCE [LARGE SCALE GENOMIC DNA]</scope>
    <source>
        <strain>TC1</strain>
    </source>
</reference>
<dbReference type="EMBL" id="CP000474">
    <property type="protein sequence ID" value="ABM09969.1"/>
    <property type="molecule type" value="Genomic_DNA"/>
</dbReference>
<dbReference type="RefSeq" id="WP_011774273.1">
    <property type="nucleotide sequence ID" value="NC_008711.1"/>
</dbReference>
<dbReference type="SMR" id="A1R516"/>
<dbReference type="STRING" id="290340.AAur_1561"/>
<dbReference type="KEGG" id="aau:AAur_1561"/>
<dbReference type="eggNOG" id="COG0481">
    <property type="taxonomic scope" value="Bacteria"/>
</dbReference>
<dbReference type="eggNOG" id="COG0532">
    <property type="taxonomic scope" value="Bacteria"/>
</dbReference>
<dbReference type="HOGENOM" id="CLU_006301_9_1_11"/>
<dbReference type="OrthoDB" id="9811804at2"/>
<dbReference type="Proteomes" id="UP000000637">
    <property type="component" value="Chromosome"/>
</dbReference>
<dbReference type="GO" id="GO:0005829">
    <property type="term" value="C:cytosol"/>
    <property type="evidence" value="ECO:0007669"/>
    <property type="project" value="TreeGrafter"/>
</dbReference>
<dbReference type="GO" id="GO:0005525">
    <property type="term" value="F:GTP binding"/>
    <property type="evidence" value="ECO:0007669"/>
    <property type="project" value="UniProtKB-KW"/>
</dbReference>
<dbReference type="GO" id="GO:0003924">
    <property type="term" value="F:GTPase activity"/>
    <property type="evidence" value="ECO:0007669"/>
    <property type="project" value="UniProtKB-UniRule"/>
</dbReference>
<dbReference type="GO" id="GO:0003743">
    <property type="term" value="F:translation initiation factor activity"/>
    <property type="evidence" value="ECO:0007669"/>
    <property type="project" value="UniProtKB-UniRule"/>
</dbReference>
<dbReference type="CDD" id="cd01887">
    <property type="entry name" value="IF2_eIF5B"/>
    <property type="match status" value="1"/>
</dbReference>
<dbReference type="CDD" id="cd03702">
    <property type="entry name" value="IF2_mtIF2_II"/>
    <property type="match status" value="1"/>
</dbReference>
<dbReference type="CDD" id="cd03692">
    <property type="entry name" value="mtIF2_IVc"/>
    <property type="match status" value="1"/>
</dbReference>
<dbReference type="FunFam" id="2.40.30.10:FF:000007">
    <property type="entry name" value="Translation initiation factor IF-2"/>
    <property type="match status" value="1"/>
</dbReference>
<dbReference type="FunFam" id="2.40.30.10:FF:000008">
    <property type="entry name" value="Translation initiation factor IF-2"/>
    <property type="match status" value="1"/>
</dbReference>
<dbReference type="FunFam" id="3.40.50.10050:FF:000001">
    <property type="entry name" value="Translation initiation factor IF-2"/>
    <property type="match status" value="1"/>
</dbReference>
<dbReference type="FunFam" id="3.40.50.300:FF:000019">
    <property type="entry name" value="Translation initiation factor IF-2"/>
    <property type="match status" value="1"/>
</dbReference>
<dbReference type="Gene3D" id="1.10.10.2480">
    <property type="match status" value="1"/>
</dbReference>
<dbReference type="Gene3D" id="3.40.50.300">
    <property type="entry name" value="P-loop containing nucleotide triphosphate hydrolases"/>
    <property type="match status" value="1"/>
</dbReference>
<dbReference type="Gene3D" id="2.40.30.10">
    <property type="entry name" value="Translation factors"/>
    <property type="match status" value="2"/>
</dbReference>
<dbReference type="Gene3D" id="3.40.50.10050">
    <property type="entry name" value="Translation initiation factor IF- 2, domain 3"/>
    <property type="match status" value="1"/>
</dbReference>
<dbReference type="HAMAP" id="MF_00100_B">
    <property type="entry name" value="IF_2_B"/>
    <property type="match status" value="1"/>
</dbReference>
<dbReference type="InterPro" id="IPR053905">
    <property type="entry name" value="EF-G-like_DII"/>
</dbReference>
<dbReference type="InterPro" id="IPR044145">
    <property type="entry name" value="IF2_II"/>
</dbReference>
<dbReference type="InterPro" id="IPR006847">
    <property type="entry name" value="IF2_N"/>
</dbReference>
<dbReference type="InterPro" id="IPR027417">
    <property type="entry name" value="P-loop_NTPase"/>
</dbReference>
<dbReference type="InterPro" id="IPR005225">
    <property type="entry name" value="Small_GTP-bd"/>
</dbReference>
<dbReference type="InterPro" id="IPR000795">
    <property type="entry name" value="T_Tr_GTP-bd_dom"/>
</dbReference>
<dbReference type="InterPro" id="IPR000178">
    <property type="entry name" value="TF_IF2_bacterial-like"/>
</dbReference>
<dbReference type="InterPro" id="IPR015760">
    <property type="entry name" value="TIF_IF2"/>
</dbReference>
<dbReference type="InterPro" id="IPR023115">
    <property type="entry name" value="TIF_IF2_dom3"/>
</dbReference>
<dbReference type="InterPro" id="IPR036925">
    <property type="entry name" value="TIF_IF2_dom3_sf"/>
</dbReference>
<dbReference type="InterPro" id="IPR009000">
    <property type="entry name" value="Transl_B-barrel_sf"/>
</dbReference>
<dbReference type="NCBIfam" id="TIGR00487">
    <property type="entry name" value="IF-2"/>
    <property type="match status" value="1"/>
</dbReference>
<dbReference type="NCBIfam" id="TIGR00231">
    <property type="entry name" value="small_GTP"/>
    <property type="match status" value="1"/>
</dbReference>
<dbReference type="PANTHER" id="PTHR43381:SF5">
    <property type="entry name" value="TR-TYPE G DOMAIN-CONTAINING PROTEIN"/>
    <property type="match status" value="1"/>
</dbReference>
<dbReference type="PANTHER" id="PTHR43381">
    <property type="entry name" value="TRANSLATION INITIATION FACTOR IF-2-RELATED"/>
    <property type="match status" value="1"/>
</dbReference>
<dbReference type="Pfam" id="PF22042">
    <property type="entry name" value="EF-G_D2"/>
    <property type="match status" value="1"/>
</dbReference>
<dbReference type="Pfam" id="PF00009">
    <property type="entry name" value="GTP_EFTU"/>
    <property type="match status" value="1"/>
</dbReference>
<dbReference type="Pfam" id="PF11987">
    <property type="entry name" value="IF-2"/>
    <property type="match status" value="1"/>
</dbReference>
<dbReference type="Pfam" id="PF04760">
    <property type="entry name" value="IF2_N"/>
    <property type="match status" value="2"/>
</dbReference>
<dbReference type="PRINTS" id="PR00315">
    <property type="entry name" value="ELONGATNFCT"/>
</dbReference>
<dbReference type="SUPFAM" id="SSF52156">
    <property type="entry name" value="Initiation factor IF2/eIF5b, domain 3"/>
    <property type="match status" value="1"/>
</dbReference>
<dbReference type="SUPFAM" id="SSF52540">
    <property type="entry name" value="P-loop containing nucleoside triphosphate hydrolases"/>
    <property type="match status" value="1"/>
</dbReference>
<dbReference type="SUPFAM" id="SSF50447">
    <property type="entry name" value="Translation proteins"/>
    <property type="match status" value="2"/>
</dbReference>
<dbReference type="PROSITE" id="PS51722">
    <property type="entry name" value="G_TR_2"/>
    <property type="match status" value="1"/>
</dbReference>
<dbReference type="PROSITE" id="PS01176">
    <property type="entry name" value="IF2"/>
    <property type="match status" value="1"/>
</dbReference>
<keyword id="KW-0963">Cytoplasm</keyword>
<keyword id="KW-0342">GTP-binding</keyword>
<keyword id="KW-0396">Initiation factor</keyword>
<keyword id="KW-0547">Nucleotide-binding</keyword>
<keyword id="KW-0648">Protein biosynthesis</keyword>
<accession>A1R516</accession>
<evidence type="ECO:0000250" key="1"/>
<evidence type="ECO:0000255" key="2">
    <source>
        <dbReference type="HAMAP-Rule" id="MF_00100"/>
    </source>
</evidence>
<evidence type="ECO:0000256" key="3">
    <source>
        <dbReference type="SAM" id="MobiDB-lite"/>
    </source>
</evidence>
<organism>
    <name type="scientific">Paenarthrobacter aurescens (strain TC1)</name>
    <dbReference type="NCBI Taxonomy" id="290340"/>
    <lineage>
        <taxon>Bacteria</taxon>
        <taxon>Bacillati</taxon>
        <taxon>Actinomycetota</taxon>
        <taxon>Actinomycetes</taxon>
        <taxon>Micrococcales</taxon>
        <taxon>Micrococcaceae</taxon>
        <taxon>Paenarthrobacter</taxon>
    </lineage>
</organism>
<feature type="chain" id="PRO_0000335456" description="Translation initiation factor IF-2">
    <location>
        <begin position="1"/>
        <end position="958"/>
    </location>
</feature>
<feature type="domain" description="tr-type G">
    <location>
        <begin position="450"/>
        <end position="621"/>
    </location>
</feature>
<feature type="region of interest" description="Disordered" evidence="3">
    <location>
        <begin position="67"/>
        <end position="95"/>
    </location>
</feature>
<feature type="region of interest" description="Disordered" evidence="3">
    <location>
        <begin position="111"/>
        <end position="355"/>
    </location>
</feature>
<feature type="region of interest" description="G1" evidence="1">
    <location>
        <begin position="459"/>
        <end position="466"/>
    </location>
</feature>
<feature type="region of interest" description="G2" evidence="1">
    <location>
        <begin position="484"/>
        <end position="488"/>
    </location>
</feature>
<feature type="region of interest" description="G3" evidence="1">
    <location>
        <begin position="509"/>
        <end position="512"/>
    </location>
</feature>
<feature type="region of interest" description="G4" evidence="1">
    <location>
        <begin position="563"/>
        <end position="566"/>
    </location>
</feature>
<feature type="region of interest" description="G5" evidence="1">
    <location>
        <begin position="599"/>
        <end position="601"/>
    </location>
</feature>
<feature type="compositionally biased region" description="Pro residues" evidence="3">
    <location>
        <begin position="75"/>
        <end position="95"/>
    </location>
</feature>
<feature type="compositionally biased region" description="Low complexity" evidence="3">
    <location>
        <begin position="140"/>
        <end position="161"/>
    </location>
</feature>
<feature type="compositionally biased region" description="Basic and acidic residues" evidence="3">
    <location>
        <begin position="195"/>
        <end position="206"/>
    </location>
</feature>
<feature type="compositionally biased region" description="Low complexity" evidence="3">
    <location>
        <begin position="209"/>
        <end position="221"/>
    </location>
</feature>
<feature type="compositionally biased region" description="Pro residues" evidence="3">
    <location>
        <begin position="228"/>
        <end position="241"/>
    </location>
</feature>
<feature type="compositionally biased region" description="Gly residues" evidence="3">
    <location>
        <begin position="268"/>
        <end position="325"/>
    </location>
</feature>
<feature type="compositionally biased region" description="Basic residues" evidence="3">
    <location>
        <begin position="326"/>
        <end position="335"/>
    </location>
</feature>
<feature type="binding site" evidence="2">
    <location>
        <begin position="459"/>
        <end position="466"/>
    </location>
    <ligand>
        <name>GTP</name>
        <dbReference type="ChEBI" id="CHEBI:37565"/>
    </ligand>
</feature>
<feature type="binding site" evidence="2">
    <location>
        <begin position="509"/>
        <end position="513"/>
    </location>
    <ligand>
        <name>GTP</name>
        <dbReference type="ChEBI" id="CHEBI:37565"/>
    </ligand>
</feature>
<feature type="binding site" evidence="2">
    <location>
        <begin position="563"/>
        <end position="566"/>
    </location>
    <ligand>
        <name>GTP</name>
        <dbReference type="ChEBI" id="CHEBI:37565"/>
    </ligand>
</feature>
<comment type="function">
    <text evidence="2">One of the essential components for the initiation of protein synthesis. Protects formylmethionyl-tRNA from spontaneous hydrolysis and promotes its binding to the 30S ribosomal subunits. Also involved in the hydrolysis of GTP during the formation of the 70S ribosomal complex.</text>
</comment>
<comment type="subcellular location">
    <subcellularLocation>
        <location evidence="2">Cytoplasm</location>
    </subcellularLocation>
</comment>
<comment type="similarity">
    <text evidence="2">Belongs to the TRAFAC class translation factor GTPase superfamily. Classic translation factor GTPase family. IF-2 subfamily.</text>
</comment>
<gene>
    <name evidence="2" type="primary">infB</name>
    <name type="ordered locus">AAur_1561</name>
</gene>
<proteinExistence type="inferred from homology"/>
<sequence>MAKVRVHELAKELGITSKDAVTKLQELGEFVRSASSTIEAPVVKKLRDAYPGAGAAKAAAPAAAPKAPAASRPAAPAPGPAAPKAPAPAPAAPAPAAPAAAAPAAAAPAAPAPAAPAAPAASTPVSAKPGARPAPKAETPAPARQGGQAPRPGGPRPGNNPFATSQGMPRGRGGDGDRPPRPGNNPFAPSQGMPRGERRNDGERPGGPRPAAGAGGPRPAAGTGGPRPGAPRPGAPRPGAPRPAGGPGAGNRPTPGMMPNRTERPAPGGAGRPGGAGRPGGGPGRPGGAPGAGTGGGAPAGGGFGKGGRGRGGTQGAFGKGGAGRGKQRKSKRAKRQELEQMSAPSLGGVSVPRGDGETIIRLRRGSSITDFAEKIDANPASLVTVLFHLGEMATATQSLDEDTFGLLGAELGYKLQVVSPEDEERELLDQFDINIQDELDAEGDDVLEARAPVVTVMGHVDHGKTRLLDAIRNSNVVAGEHGGITQHIGAYQISHVHEGKARDITFIDTPGHEAFTAMRARGAKVTDIAILVVAADDGVMPQTVEALNHAQAANVPIVVAVNKIDKEGANPDKVKGQLTEYGLVPEEYGGDTMFVEVSARQNLNIDELIDAVLLTADAALDLRANPDKDARGIAIEANLDKGRGAVATVLVQSGTLAVGDTIVAGTAHGRVRAMFDENGEALDVALPSRPVQVLGLSNVPRAGDTFLVTPDERTARQIAEKREAADRNAALAKRRKRISLEDFDQAVAEGKIDTLNLILKGDVSGAVEALEDALLKIDVGDDDVQLRVIHRGVGAITQNDVNLATVDNAIIIGFNVKPAERVAELADREGVDMRFYSVIYAAIDDIEMALKGMLKPEYEEVQLGTAEVREVFRSSKFGNIAGSIVRTGIIRRNSKARVSRDGKVIGDNLTVETLKRFKDDATEVRTDFECGIGLGSFNDINEGDIIETFEMREKPRS</sequence>
<protein>
    <recommendedName>
        <fullName evidence="2">Translation initiation factor IF-2</fullName>
    </recommendedName>
</protein>